<sequence length="299" mass="32598">MRRAETIAEIRAAVRELRYRENPRLKGETWGTRSIGFVPTMGALHEGHLSLVRAAKAECDAVVASIFVNPTQFGPNEDFGKYPRTVEADCALLEREGVDAVFLPQVEEMYPAGATTWVEVEELSGRLDGASRPGHFRGVATVVAKLFHIVGPDRAYFGQKDAAQVANLRRMVRDLDFDLEVVVCPIVREADGLAMSSRNRYLSVEERRQGLVLSRALRAMEAGHAAGERDGRRLLAAGASVMAEEPAVRVDYLRVVDPETLVDVEAVSGPALATVAAYVGATRLIDNVLLGETPAAFKL</sequence>
<feature type="chain" id="PRO_1000123394" description="Pantothenate synthetase">
    <location>
        <begin position="1"/>
        <end position="299"/>
    </location>
</feature>
<feature type="active site" description="Proton donor" evidence="1">
    <location>
        <position position="48"/>
    </location>
</feature>
<feature type="binding site" evidence="1">
    <location>
        <begin position="41"/>
        <end position="48"/>
    </location>
    <ligand>
        <name>ATP</name>
        <dbReference type="ChEBI" id="CHEBI:30616"/>
    </ligand>
</feature>
<feature type="binding site" evidence="1">
    <location>
        <position position="72"/>
    </location>
    <ligand>
        <name>(R)-pantoate</name>
        <dbReference type="ChEBI" id="CHEBI:15980"/>
    </ligand>
</feature>
<feature type="binding site" evidence="1">
    <location>
        <position position="72"/>
    </location>
    <ligand>
        <name>beta-alanine</name>
        <dbReference type="ChEBI" id="CHEBI:57966"/>
    </ligand>
</feature>
<feature type="binding site" evidence="1">
    <location>
        <begin position="158"/>
        <end position="161"/>
    </location>
    <ligand>
        <name>ATP</name>
        <dbReference type="ChEBI" id="CHEBI:30616"/>
    </ligand>
</feature>
<feature type="binding site" evidence="1">
    <location>
        <position position="164"/>
    </location>
    <ligand>
        <name>(R)-pantoate</name>
        <dbReference type="ChEBI" id="CHEBI:15980"/>
    </ligand>
</feature>
<feature type="binding site" evidence="1">
    <location>
        <position position="187"/>
    </location>
    <ligand>
        <name>ATP</name>
        <dbReference type="ChEBI" id="CHEBI:30616"/>
    </ligand>
</feature>
<feature type="binding site" evidence="1">
    <location>
        <begin position="195"/>
        <end position="198"/>
    </location>
    <ligand>
        <name>ATP</name>
        <dbReference type="ChEBI" id="CHEBI:30616"/>
    </ligand>
</feature>
<dbReference type="EC" id="6.3.2.1" evidence="1"/>
<dbReference type="EMBL" id="CP001472">
    <property type="protein sequence ID" value="ACO33519.1"/>
    <property type="molecule type" value="Genomic_DNA"/>
</dbReference>
<dbReference type="RefSeq" id="WP_015897107.1">
    <property type="nucleotide sequence ID" value="NC_012483.1"/>
</dbReference>
<dbReference type="SMR" id="C1F8U3"/>
<dbReference type="FunCoup" id="C1F8U3">
    <property type="interactions" value="537"/>
</dbReference>
<dbReference type="STRING" id="240015.ACP_2002"/>
<dbReference type="KEGG" id="aca:ACP_2002"/>
<dbReference type="eggNOG" id="COG0414">
    <property type="taxonomic scope" value="Bacteria"/>
</dbReference>
<dbReference type="HOGENOM" id="CLU_047148_0_0_0"/>
<dbReference type="InParanoid" id="C1F8U3"/>
<dbReference type="OrthoDB" id="9773087at2"/>
<dbReference type="UniPathway" id="UPA00028">
    <property type="reaction ID" value="UER00005"/>
</dbReference>
<dbReference type="Proteomes" id="UP000002207">
    <property type="component" value="Chromosome"/>
</dbReference>
<dbReference type="GO" id="GO:0005829">
    <property type="term" value="C:cytosol"/>
    <property type="evidence" value="ECO:0007669"/>
    <property type="project" value="TreeGrafter"/>
</dbReference>
<dbReference type="GO" id="GO:0005524">
    <property type="term" value="F:ATP binding"/>
    <property type="evidence" value="ECO:0007669"/>
    <property type="project" value="UniProtKB-KW"/>
</dbReference>
<dbReference type="GO" id="GO:0004592">
    <property type="term" value="F:pantoate-beta-alanine ligase activity"/>
    <property type="evidence" value="ECO:0007669"/>
    <property type="project" value="UniProtKB-UniRule"/>
</dbReference>
<dbReference type="GO" id="GO:0015940">
    <property type="term" value="P:pantothenate biosynthetic process"/>
    <property type="evidence" value="ECO:0007669"/>
    <property type="project" value="UniProtKB-UniRule"/>
</dbReference>
<dbReference type="CDD" id="cd00560">
    <property type="entry name" value="PanC"/>
    <property type="match status" value="1"/>
</dbReference>
<dbReference type="FunFam" id="3.30.1300.10:FF:000001">
    <property type="entry name" value="Pantothenate synthetase"/>
    <property type="match status" value="1"/>
</dbReference>
<dbReference type="FunFam" id="3.40.50.620:FF:000013">
    <property type="entry name" value="Pantothenate synthetase"/>
    <property type="match status" value="1"/>
</dbReference>
<dbReference type="Gene3D" id="3.40.50.620">
    <property type="entry name" value="HUPs"/>
    <property type="match status" value="1"/>
</dbReference>
<dbReference type="Gene3D" id="3.30.1300.10">
    <property type="entry name" value="Pantoate-beta-alanine ligase, C-terminal domain"/>
    <property type="match status" value="1"/>
</dbReference>
<dbReference type="HAMAP" id="MF_00158">
    <property type="entry name" value="PanC"/>
    <property type="match status" value="1"/>
</dbReference>
<dbReference type="InterPro" id="IPR004821">
    <property type="entry name" value="Cyt_trans-like"/>
</dbReference>
<dbReference type="InterPro" id="IPR003721">
    <property type="entry name" value="Pantoate_ligase"/>
</dbReference>
<dbReference type="InterPro" id="IPR042176">
    <property type="entry name" value="Pantoate_ligase_C"/>
</dbReference>
<dbReference type="InterPro" id="IPR014729">
    <property type="entry name" value="Rossmann-like_a/b/a_fold"/>
</dbReference>
<dbReference type="NCBIfam" id="TIGR00125">
    <property type="entry name" value="cyt_tran_rel"/>
    <property type="match status" value="1"/>
</dbReference>
<dbReference type="NCBIfam" id="TIGR00018">
    <property type="entry name" value="panC"/>
    <property type="match status" value="1"/>
</dbReference>
<dbReference type="PANTHER" id="PTHR21299">
    <property type="entry name" value="CYTIDYLATE KINASE/PANTOATE-BETA-ALANINE LIGASE"/>
    <property type="match status" value="1"/>
</dbReference>
<dbReference type="PANTHER" id="PTHR21299:SF1">
    <property type="entry name" value="PANTOATE--BETA-ALANINE LIGASE"/>
    <property type="match status" value="1"/>
</dbReference>
<dbReference type="Pfam" id="PF02569">
    <property type="entry name" value="Pantoate_ligase"/>
    <property type="match status" value="1"/>
</dbReference>
<dbReference type="SUPFAM" id="SSF52374">
    <property type="entry name" value="Nucleotidylyl transferase"/>
    <property type="match status" value="1"/>
</dbReference>
<reference key="1">
    <citation type="journal article" date="2009" name="Appl. Environ. Microbiol.">
        <title>Three genomes from the phylum Acidobacteria provide insight into the lifestyles of these microorganisms in soils.</title>
        <authorList>
            <person name="Ward N.L."/>
            <person name="Challacombe J.F."/>
            <person name="Janssen P.H."/>
            <person name="Henrissat B."/>
            <person name="Coutinho P.M."/>
            <person name="Wu M."/>
            <person name="Xie G."/>
            <person name="Haft D.H."/>
            <person name="Sait M."/>
            <person name="Badger J."/>
            <person name="Barabote R.D."/>
            <person name="Bradley B."/>
            <person name="Brettin T.S."/>
            <person name="Brinkac L.M."/>
            <person name="Bruce D."/>
            <person name="Creasy T."/>
            <person name="Daugherty S.C."/>
            <person name="Davidsen T.M."/>
            <person name="DeBoy R.T."/>
            <person name="Detter J.C."/>
            <person name="Dodson R.J."/>
            <person name="Durkin A.S."/>
            <person name="Ganapathy A."/>
            <person name="Gwinn-Giglio M."/>
            <person name="Han C.S."/>
            <person name="Khouri H."/>
            <person name="Kiss H."/>
            <person name="Kothari S.P."/>
            <person name="Madupu R."/>
            <person name="Nelson K.E."/>
            <person name="Nelson W.C."/>
            <person name="Paulsen I."/>
            <person name="Penn K."/>
            <person name="Ren Q."/>
            <person name="Rosovitz M.J."/>
            <person name="Selengut J.D."/>
            <person name="Shrivastava S."/>
            <person name="Sullivan S.A."/>
            <person name="Tapia R."/>
            <person name="Thompson L.S."/>
            <person name="Watkins K.L."/>
            <person name="Yang Q."/>
            <person name="Yu C."/>
            <person name="Zafar N."/>
            <person name="Zhou L."/>
            <person name="Kuske C.R."/>
        </authorList>
    </citation>
    <scope>NUCLEOTIDE SEQUENCE [LARGE SCALE GENOMIC DNA]</scope>
    <source>
        <strain>ATCC 51196 / DSM 11244 / BCRC 80197 / JCM 7670 / NBRC 15755 / NCIMB 13165 / 161</strain>
    </source>
</reference>
<accession>C1F8U3</accession>
<protein>
    <recommendedName>
        <fullName evidence="1">Pantothenate synthetase</fullName>
        <shortName evidence="1">PS</shortName>
        <ecNumber evidence="1">6.3.2.1</ecNumber>
    </recommendedName>
    <alternativeName>
        <fullName evidence="1">Pantoate--beta-alanine ligase</fullName>
    </alternativeName>
    <alternativeName>
        <fullName evidence="1">Pantoate-activating enzyme</fullName>
    </alternativeName>
</protein>
<name>PANC_ACIC5</name>
<evidence type="ECO:0000255" key="1">
    <source>
        <dbReference type="HAMAP-Rule" id="MF_00158"/>
    </source>
</evidence>
<organism>
    <name type="scientific">Acidobacterium capsulatum (strain ATCC 51196 / DSM 11244 / BCRC 80197 / JCM 7670 / NBRC 15755 / NCIMB 13165 / 161)</name>
    <dbReference type="NCBI Taxonomy" id="240015"/>
    <lineage>
        <taxon>Bacteria</taxon>
        <taxon>Pseudomonadati</taxon>
        <taxon>Acidobacteriota</taxon>
        <taxon>Terriglobia</taxon>
        <taxon>Terriglobales</taxon>
        <taxon>Acidobacteriaceae</taxon>
        <taxon>Acidobacterium</taxon>
    </lineage>
</organism>
<proteinExistence type="inferred from homology"/>
<gene>
    <name evidence="1" type="primary">panC</name>
    <name type="ordered locus">ACP_2002</name>
</gene>
<keyword id="KW-0067">ATP-binding</keyword>
<keyword id="KW-0963">Cytoplasm</keyword>
<keyword id="KW-0436">Ligase</keyword>
<keyword id="KW-0547">Nucleotide-binding</keyword>
<keyword id="KW-0566">Pantothenate biosynthesis</keyword>
<keyword id="KW-1185">Reference proteome</keyword>
<comment type="function">
    <text evidence="1">Catalyzes the condensation of pantoate with beta-alanine in an ATP-dependent reaction via a pantoyl-adenylate intermediate.</text>
</comment>
<comment type="catalytic activity">
    <reaction evidence="1">
        <text>(R)-pantoate + beta-alanine + ATP = (R)-pantothenate + AMP + diphosphate + H(+)</text>
        <dbReference type="Rhea" id="RHEA:10912"/>
        <dbReference type="ChEBI" id="CHEBI:15378"/>
        <dbReference type="ChEBI" id="CHEBI:15980"/>
        <dbReference type="ChEBI" id="CHEBI:29032"/>
        <dbReference type="ChEBI" id="CHEBI:30616"/>
        <dbReference type="ChEBI" id="CHEBI:33019"/>
        <dbReference type="ChEBI" id="CHEBI:57966"/>
        <dbReference type="ChEBI" id="CHEBI:456215"/>
        <dbReference type="EC" id="6.3.2.1"/>
    </reaction>
</comment>
<comment type="pathway">
    <text evidence="1">Cofactor biosynthesis; (R)-pantothenate biosynthesis; (R)-pantothenate from (R)-pantoate and beta-alanine: step 1/1.</text>
</comment>
<comment type="subunit">
    <text evidence="1">Homodimer.</text>
</comment>
<comment type="subcellular location">
    <subcellularLocation>
        <location evidence="1">Cytoplasm</location>
    </subcellularLocation>
</comment>
<comment type="miscellaneous">
    <text evidence="1">The reaction proceeds by a bi uni uni bi ping pong mechanism.</text>
</comment>
<comment type="similarity">
    <text evidence="1">Belongs to the pantothenate synthetase family.</text>
</comment>